<proteinExistence type="inferred from homology"/>
<comment type="function">
    <text evidence="1">DNA-dependent RNA polymerase catalyzes the transcription of DNA into RNA using the four ribonucleoside triphosphates as substrates.</text>
</comment>
<comment type="catalytic activity">
    <reaction evidence="1">
        <text>RNA(n) + a ribonucleoside 5'-triphosphate = RNA(n+1) + diphosphate</text>
        <dbReference type="Rhea" id="RHEA:21248"/>
        <dbReference type="Rhea" id="RHEA-COMP:14527"/>
        <dbReference type="Rhea" id="RHEA-COMP:17342"/>
        <dbReference type="ChEBI" id="CHEBI:33019"/>
        <dbReference type="ChEBI" id="CHEBI:61557"/>
        <dbReference type="ChEBI" id="CHEBI:140395"/>
        <dbReference type="EC" id="2.7.7.6"/>
    </reaction>
</comment>
<comment type="subunit">
    <text evidence="1">The RNAP catalytic core consists of 2 alpha, 1 beta, 1 beta' and 1 omega subunit. When a sigma factor is associated with the core the holoenzyme is formed, which can initiate transcription.</text>
</comment>
<comment type="similarity">
    <text evidence="1">Belongs to the RNA polymerase beta chain family.</text>
</comment>
<organism>
    <name type="scientific">Borrelia recurrentis (strain A1)</name>
    <dbReference type="NCBI Taxonomy" id="412418"/>
    <lineage>
        <taxon>Bacteria</taxon>
        <taxon>Pseudomonadati</taxon>
        <taxon>Spirochaetota</taxon>
        <taxon>Spirochaetia</taxon>
        <taxon>Spirochaetales</taxon>
        <taxon>Borreliaceae</taxon>
        <taxon>Borrelia</taxon>
    </lineage>
</organism>
<feature type="chain" id="PRO_1000141666" description="DNA-directed RNA polymerase subunit beta">
    <location>
        <begin position="1"/>
        <end position="1155"/>
    </location>
</feature>
<sequence length="1155" mass="130087">MIKRVHLGQGKAEEILNLPNLIEIQLNSYEKFLQLERLKNNKPLLNEGLESVFRDVFPMKSSNGEVALEYEKYYIEYDSISFTEKECKRKGQSYEAVLKIRLNLQFLTTGEIRQKDVYMGTIPLMTDRGTFIVNGAERVIVSQIHRSPGVVFYKEKDLYYARIIPYRGSWLEFEIDSKKDYLYVKIDRKKRILVTLFLRALGLDTREKIIETFYKIRKIEVNDDTKREITGQYLATNITIKENMTYRAGDKITLQDIEDFLQNGVKEINLIDFDGYDSVPGKHFISSDVILNCFEKEDAYFALKDGFKELSRESVMLAVYSVLLPGEPISIDNAENDLRTIFFSEKRYDLGHVGRYKLSKKFGLDDLTTSVLTMTDIVNTISHLLRIYDGHDVLDDIDHLGNRRVRSVGELLTNIYKGAMSRVEKIAKDRMSNKEVFNLKPQELISVKPVVSAVKEFFATSQLSQFMDQVNPLAELTHKRRLNALGPGGLSRDRAGFEVRDVHYTHYGRMCPIETPEGPNIGLIVSLATYSKVNDYGFLETPYRKVIDGKVTDDIEYLSAIDEEKKCIAQANASVSSDGNYTDDLVSVRISGDYTTMMPKNIDYMDVSPRQLISVSSALIPFLEHNDANRALMGSNMQRQAVPLLFPQPPIVGTGMERIVAKDSGVVIKAKRPGRVVLATNKKIVIKPDNATSERDLDEYELYKYERTNQDTSFNHSVLVKNGQIVNKDEIIADGPATRYGELALGNNLLVGFIPWNGFNYEDAILISERIVKEDLYTSIHIKEFSIEVRETKLGPEKVTADIPNVSGKILSKLDENGIVRIGTYVKPGDILIGKVTPKSEGDITPEFKLLTSIFGEKAKDVKNNSLKVPHGTEGTVIDVQRITKDDVGNLPPGVDEILKVYIAKKRKLKEGDKMAGRHGNKGVVAKILPVEDMPYLADGTPLDICLNPLGVPSRMNIGQLMESQLGLAGKYLGEYYDVPVFESATNECIQEKLKKAGFNETSKAVLYDGYTGEPFENEVMVGVIYMLKLHHLVDDKMHARSTGPYSLVSQQPLGGKAQFGGQRLGEMEVWALEAYGAAHTLQELLTVKSDDMSGRVKIYENIVKGIPTNVSGIPESFNVLMQELRGLGFDLSIYDDNGNQIPLTEKEEELINKT</sequence>
<accession>B5RRJ7</accession>
<evidence type="ECO:0000255" key="1">
    <source>
        <dbReference type="HAMAP-Rule" id="MF_01321"/>
    </source>
</evidence>
<dbReference type="EC" id="2.7.7.6" evidence="1"/>
<dbReference type="EMBL" id="CP000993">
    <property type="protein sequence ID" value="ACH94631.1"/>
    <property type="molecule type" value="Genomic_DNA"/>
</dbReference>
<dbReference type="RefSeq" id="WP_012538867.1">
    <property type="nucleotide sequence ID" value="NC_011244.1"/>
</dbReference>
<dbReference type="SMR" id="B5RRJ7"/>
<dbReference type="KEGG" id="bre:BRE_387"/>
<dbReference type="HOGENOM" id="CLU_000524_4_3_12"/>
<dbReference type="Proteomes" id="UP000000612">
    <property type="component" value="Chromosome"/>
</dbReference>
<dbReference type="GO" id="GO:0000428">
    <property type="term" value="C:DNA-directed RNA polymerase complex"/>
    <property type="evidence" value="ECO:0007669"/>
    <property type="project" value="UniProtKB-KW"/>
</dbReference>
<dbReference type="GO" id="GO:0003677">
    <property type="term" value="F:DNA binding"/>
    <property type="evidence" value="ECO:0007669"/>
    <property type="project" value="UniProtKB-UniRule"/>
</dbReference>
<dbReference type="GO" id="GO:0003899">
    <property type="term" value="F:DNA-directed RNA polymerase activity"/>
    <property type="evidence" value="ECO:0007669"/>
    <property type="project" value="UniProtKB-UniRule"/>
</dbReference>
<dbReference type="GO" id="GO:0032549">
    <property type="term" value="F:ribonucleoside binding"/>
    <property type="evidence" value="ECO:0007669"/>
    <property type="project" value="InterPro"/>
</dbReference>
<dbReference type="GO" id="GO:0006351">
    <property type="term" value="P:DNA-templated transcription"/>
    <property type="evidence" value="ECO:0007669"/>
    <property type="project" value="UniProtKB-UniRule"/>
</dbReference>
<dbReference type="CDD" id="cd00653">
    <property type="entry name" value="RNA_pol_B_RPB2"/>
    <property type="match status" value="1"/>
</dbReference>
<dbReference type="Gene3D" id="2.40.50.100">
    <property type="match status" value="1"/>
</dbReference>
<dbReference type="Gene3D" id="2.40.50.150">
    <property type="match status" value="1"/>
</dbReference>
<dbReference type="Gene3D" id="3.90.1100.10">
    <property type="match status" value="2"/>
</dbReference>
<dbReference type="Gene3D" id="2.30.150.10">
    <property type="entry name" value="DNA-directed RNA polymerase, beta subunit, external 1 domain"/>
    <property type="match status" value="1"/>
</dbReference>
<dbReference type="Gene3D" id="2.40.270.10">
    <property type="entry name" value="DNA-directed RNA polymerase, subunit 2, domain 6"/>
    <property type="match status" value="2"/>
</dbReference>
<dbReference type="Gene3D" id="3.90.1800.10">
    <property type="entry name" value="RNA polymerase alpha subunit dimerisation domain"/>
    <property type="match status" value="1"/>
</dbReference>
<dbReference type="Gene3D" id="3.90.1110.10">
    <property type="entry name" value="RNA polymerase Rpb2, domain 2"/>
    <property type="match status" value="2"/>
</dbReference>
<dbReference type="HAMAP" id="MF_01321">
    <property type="entry name" value="RNApol_bact_RpoB"/>
    <property type="match status" value="1"/>
</dbReference>
<dbReference type="InterPro" id="IPR042107">
    <property type="entry name" value="DNA-dir_RNA_pol_bsu_ext_1_sf"/>
</dbReference>
<dbReference type="InterPro" id="IPR019462">
    <property type="entry name" value="DNA-dir_RNA_pol_bsu_external_1"/>
</dbReference>
<dbReference type="InterPro" id="IPR015712">
    <property type="entry name" value="DNA-dir_RNA_pol_su2"/>
</dbReference>
<dbReference type="InterPro" id="IPR007120">
    <property type="entry name" value="DNA-dir_RNAP_su2_dom"/>
</dbReference>
<dbReference type="InterPro" id="IPR037033">
    <property type="entry name" value="DNA-dir_RNAP_su2_hyb_sf"/>
</dbReference>
<dbReference type="InterPro" id="IPR010243">
    <property type="entry name" value="RNA_pol_bsu_bac"/>
</dbReference>
<dbReference type="InterPro" id="IPR007121">
    <property type="entry name" value="RNA_pol_bsu_CS"/>
</dbReference>
<dbReference type="InterPro" id="IPR007644">
    <property type="entry name" value="RNA_pol_bsu_protrusion"/>
</dbReference>
<dbReference type="InterPro" id="IPR007642">
    <property type="entry name" value="RNA_pol_Rpb2_2"/>
</dbReference>
<dbReference type="InterPro" id="IPR037034">
    <property type="entry name" value="RNA_pol_Rpb2_2_sf"/>
</dbReference>
<dbReference type="InterPro" id="IPR007645">
    <property type="entry name" value="RNA_pol_Rpb2_3"/>
</dbReference>
<dbReference type="InterPro" id="IPR007641">
    <property type="entry name" value="RNA_pol_Rpb2_7"/>
</dbReference>
<dbReference type="InterPro" id="IPR014724">
    <property type="entry name" value="RNA_pol_RPB2_OB-fold"/>
</dbReference>
<dbReference type="NCBIfam" id="NF001616">
    <property type="entry name" value="PRK00405.1"/>
    <property type="match status" value="1"/>
</dbReference>
<dbReference type="NCBIfam" id="TIGR02013">
    <property type="entry name" value="rpoB"/>
    <property type="match status" value="1"/>
</dbReference>
<dbReference type="PANTHER" id="PTHR20856">
    <property type="entry name" value="DNA-DIRECTED RNA POLYMERASE I SUBUNIT 2"/>
    <property type="match status" value="1"/>
</dbReference>
<dbReference type="Pfam" id="PF04563">
    <property type="entry name" value="RNA_pol_Rpb2_1"/>
    <property type="match status" value="1"/>
</dbReference>
<dbReference type="Pfam" id="PF04561">
    <property type="entry name" value="RNA_pol_Rpb2_2"/>
    <property type="match status" value="2"/>
</dbReference>
<dbReference type="Pfam" id="PF04565">
    <property type="entry name" value="RNA_pol_Rpb2_3"/>
    <property type="match status" value="1"/>
</dbReference>
<dbReference type="Pfam" id="PF10385">
    <property type="entry name" value="RNA_pol_Rpb2_45"/>
    <property type="match status" value="1"/>
</dbReference>
<dbReference type="Pfam" id="PF00562">
    <property type="entry name" value="RNA_pol_Rpb2_6"/>
    <property type="match status" value="1"/>
</dbReference>
<dbReference type="Pfam" id="PF04560">
    <property type="entry name" value="RNA_pol_Rpb2_7"/>
    <property type="match status" value="1"/>
</dbReference>
<dbReference type="SUPFAM" id="SSF64484">
    <property type="entry name" value="beta and beta-prime subunits of DNA dependent RNA-polymerase"/>
    <property type="match status" value="1"/>
</dbReference>
<dbReference type="PROSITE" id="PS01166">
    <property type="entry name" value="RNA_POL_BETA"/>
    <property type="match status" value="1"/>
</dbReference>
<keyword id="KW-0240">DNA-directed RNA polymerase</keyword>
<keyword id="KW-0548">Nucleotidyltransferase</keyword>
<keyword id="KW-0804">Transcription</keyword>
<keyword id="KW-0808">Transferase</keyword>
<protein>
    <recommendedName>
        <fullName evidence="1">DNA-directed RNA polymerase subunit beta</fullName>
        <shortName evidence="1">RNAP subunit beta</shortName>
        <ecNumber evidence="1">2.7.7.6</ecNumber>
    </recommendedName>
    <alternativeName>
        <fullName evidence="1">RNA polymerase subunit beta</fullName>
    </alternativeName>
    <alternativeName>
        <fullName evidence="1">Transcriptase subunit beta</fullName>
    </alternativeName>
</protein>
<gene>
    <name evidence="1" type="primary">rpoB</name>
    <name type="ordered locus">BRE_387</name>
</gene>
<name>RPOB_BORRA</name>
<reference key="1">
    <citation type="journal article" date="2008" name="PLoS Genet.">
        <title>The genome of Borrelia recurrentis, the agent of deadly louse-borne relapsing fever, is a degraded subset of tick-borne Borrelia duttonii.</title>
        <authorList>
            <person name="Lescot M."/>
            <person name="Audic S."/>
            <person name="Robert C."/>
            <person name="Nguyen T.T."/>
            <person name="Blanc G."/>
            <person name="Cutler S.J."/>
            <person name="Wincker P."/>
            <person name="Couloux A."/>
            <person name="Claverie J.-M."/>
            <person name="Raoult D."/>
            <person name="Drancourt M."/>
        </authorList>
    </citation>
    <scope>NUCLEOTIDE SEQUENCE [LARGE SCALE GENOMIC DNA]</scope>
    <source>
        <strain>A1</strain>
    </source>
</reference>